<evidence type="ECO:0000255" key="1">
    <source>
        <dbReference type="HAMAP-Rule" id="MF_00337"/>
    </source>
</evidence>
<keyword id="KW-0963">Cytoplasm</keyword>
<keyword id="KW-0269">Exonuclease</keyword>
<keyword id="KW-0378">Hydrolase</keyword>
<keyword id="KW-0540">Nuclease</keyword>
<comment type="function">
    <text evidence="1">Bidirectionally degrades single-stranded DNA into large acid-insoluble oligonucleotides, which are then degraded further into small acid-soluble oligonucleotides.</text>
</comment>
<comment type="catalytic activity">
    <reaction evidence="1">
        <text>Exonucleolytic cleavage in either 5'- to 3'- or 3'- to 5'-direction to yield nucleoside 5'-phosphates.</text>
        <dbReference type="EC" id="3.1.11.6"/>
    </reaction>
</comment>
<comment type="subunit">
    <text evidence="1">Heterooligomer composed of large and small subunits.</text>
</comment>
<comment type="subcellular location">
    <subcellularLocation>
        <location evidence="1">Cytoplasm</location>
    </subcellularLocation>
</comment>
<comment type="similarity">
    <text evidence="1">Belongs to the XseB family.</text>
</comment>
<reference key="1">
    <citation type="journal article" date="2008" name="Genome Res.">
        <title>Chlamydia trachomatis: genome sequence analysis of lymphogranuloma venereum isolates.</title>
        <authorList>
            <person name="Thomson N.R."/>
            <person name="Holden M.T.G."/>
            <person name="Carder C."/>
            <person name="Lennard N."/>
            <person name="Lockey S.J."/>
            <person name="Marsh P."/>
            <person name="Skipp P."/>
            <person name="O'Connor C.D."/>
            <person name="Goodhead I."/>
            <person name="Norbertzcak H."/>
            <person name="Harris B."/>
            <person name="Ormond D."/>
            <person name="Rance R."/>
            <person name="Quail M.A."/>
            <person name="Parkhill J."/>
            <person name="Stephens R.S."/>
            <person name="Clarke I.N."/>
        </authorList>
    </citation>
    <scope>NUCLEOTIDE SEQUENCE [LARGE SCALE GENOMIC DNA]</scope>
    <source>
        <strain>UCH-1/proctitis</strain>
    </source>
</reference>
<gene>
    <name evidence="1" type="primary">xseB</name>
    <name type="ordered locus">CTLon_0580</name>
</gene>
<organism>
    <name type="scientific">Chlamydia trachomatis serovar L2b (strain UCH-1/proctitis)</name>
    <dbReference type="NCBI Taxonomy" id="471473"/>
    <lineage>
        <taxon>Bacteria</taxon>
        <taxon>Pseudomonadati</taxon>
        <taxon>Chlamydiota</taxon>
        <taxon>Chlamydiia</taxon>
        <taxon>Chlamydiales</taxon>
        <taxon>Chlamydiaceae</taxon>
        <taxon>Chlamydia/Chlamydophila group</taxon>
        <taxon>Chlamydia</taxon>
    </lineage>
</organism>
<dbReference type="EC" id="3.1.11.6" evidence="1"/>
<dbReference type="EMBL" id="AM884177">
    <property type="protein sequence ID" value="CAP06977.1"/>
    <property type="molecule type" value="Genomic_DNA"/>
</dbReference>
<dbReference type="RefSeq" id="WP_009872566.1">
    <property type="nucleotide sequence ID" value="NC_010280.2"/>
</dbReference>
<dbReference type="SMR" id="B0BBW2"/>
<dbReference type="KEGG" id="ctl:CTLon_0580"/>
<dbReference type="HOGENOM" id="CLU_145918_3_4_0"/>
<dbReference type="Proteomes" id="UP001154401">
    <property type="component" value="Chromosome"/>
</dbReference>
<dbReference type="GO" id="GO:0005829">
    <property type="term" value="C:cytosol"/>
    <property type="evidence" value="ECO:0007669"/>
    <property type="project" value="TreeGrafter"/>
</dbReference>
<dbReference type="GO" id="GO:0009318">
    <property type="term" value="C:exodeoxyribonuclease VII complex"/>
    <property type="evidence" value="ECO:0007669"/>
    <property type="project" value="InterPro"/>
</dbReference>
<dbReference type="GO" id="GO:0008855">
    <property type="term" value="F:exodeoxyribonuclease VII activity"/>
    <property type="evidence" value="ECO:0007669"/>
    <property type="project" value="UniProtKB-UniRule"/>
</dbReference>
<dbReference type="GO" id="GO:0006308">
    <property type="term" value="P:DNA catabolic process"/>
    <property type="evidence" value="ECO:0007669"/>
    <property type="project" value="UniProtKB-UniRule"/>
</dbReference>
<dbReference type="FunFam" id="1.10.287.1040:FF:000013">
    <property type="entry name" value="Exodeoxyribonuclease 7 small subunit"/>
    <property type="match status" value="1"/>
</dbReference>
<dbReference type="Gene3D" id="1.10.287.1040">
    <property type="entry name" value="Exonuclease VII, small subunit"/>
    <property type="match status" value="1"/>
</dbReference>
<dbReference type="HAMAP" id="MF_00337">
    <property type="entry name" value="Exonuc_7_S"/>
    <property type="match status" value="1"/>
</dbReference>
<dbReference type="InterPro" id="IPR003761">
    <property type="entry name" value="Exonuc_VII_S"/>
</dbReference>
<dbReference type="InterPro" id="IPR037004">
    <property type="entry name" value="Exonuc_VII_ssu_sf"/>
</dbReference>
<dbReference type="NCBIfam" id="NF002140">
    <property type="entry name" value="PRK00977.1-4"/>
    <property type="match status" value="1"/>
</dbReference>
<dbReference type="NCBIfam" id="TIGR01280">
    <property type="entry name" value="xseB"/>
    <property type="match status" value="1"/>
</dbReference>
<dbReference type="PANTHER" id="PTHR34137">
    <property type="entry name" value="EXODEOXYRIBONUCLEASE 7 SMALL SUBUNIT"/>
    <property type="match status" value="1"/>
</dbReference>
<dbReference type="PANTHER" id="PTHR34137:SF1">
    <property type="entry name" value="EXODEOXYRIBONUCLEASE 7 SMALL SUBUNIT"/>
    <property type="match status" value="1"/>
</dbReference>
<dbReference type="Pfam" id="PF02609">
    <property type="entry name" value="Exonuc_VII_S"/>
    <property type="match status" value="1"/>
</dbReference>
<dbReference type="PIRSF" id="PIRSF006488">
    <property type="entry name" value="Exonuc_VII_S"/>
    <property type="match status" value="1"/>
</dbReference>
<dbReference type="SUPFAM" id="SSF116842">
    <property type="entry name" value="XseB-like"/>
    <property type="match status" value="1"/>
</dbReference>
<feature type="chain" id="PRO_1000119911" description="Exodeoxyribonuclease 7 small subunit">
    <location>
        <begin position="1"/>
        <end position="72"/>
    </location>
</feature>
<accession>B0BBW2</accession>
<name>EX7S_CHLTB</name>
<protein>
    <recommendedName>
        <fullName evidence="1">Exodeoxyribonuclease 7 small subunit</fullName>
        <ecNumber evidence="1">3.1.11.6</ecNumber>
    </recommendedName>
    <alternativeName>
        <fullName evidence="1">Exodeoxyribonuclease VII small subunit</fullName>
        <shortName evidence="1">Exonuclease VII small subunit</shortName>
    </alternativeName>
</protein>
<sequence length="72" mass="8358">MTKKAKNVEKVPFEDAMKRLEEIIDLMNQPTTSLEASLALYEEADQLMRICESRIQEVEARIKQLSDQRSES</sequence>
<proteinExistence type="inferred from homology"/>